<reference key="1">
    <citation type="submission" date="2007-08" db="EMBL/GenBank/DDBJ databases">
        <authorList>
            <consortium name="The Vibrio harveyi Genome Sequencing Project"/>
            <person name="Bassler B."/>
            <person name="Clifton S.W."/>
            <person name="Fulton L."/>
            <person name="Delehaunty K."/>
            <person name="Fronick C."/>
            <person name="Harrison M."/>
            <person name="Markivic C."/>
            <person name="Fulton R."/>
            <person name="Tin-Wollam A.-M."/>
            <person name="Shah N."/>
            <person name="Pepin K."/>
            <person name="Nash W."/>
            <person name="Thiruvilangam P."/>
            <person name="Bhonagiri V."/>
            <person name="Waters C."/>
            <person name="Tu K.C."/>
            <person name="Irgon J."/>
            <person name="Wilson R.K."/>
        </authorList>
    </citation>
    <scope>NUCLEOTIDE SEQUENCE [LARGE SCALE GENOMIC DNA]</scope>
    <source>
        <strain>ATCC BAA-1116 / BB120</strain>
    </source>
</reference>
<evidence type="ECO:0000255" key="1">
    <source>
        <dbReference type="HAMAP-Rule" id="MF_01196"/>
    </source>
</evidence>
<evidence type="ECO:0000256" key="2">
    <source>
        <dbReference type="SAM" id="MobiDB-lite"/>
    </source>
</evidence>
<proteinExistence type="inferred from homology"/>
<comment type="function">
    <text evidence="1">Non-essential, abundant cell division factor that is required for proper Z-ring formation. It is recruited early to the divisome by direct interaction with FtsZ, stimulating Z-ring assembly and thereby promoting cell division earlier in the cell cycle. Its recruitment to the Z-ring requires functional FtsA or ZipA.</text>
</comment>
<comment type="subunit">
    <text evidence="1">Homodimer. The ends of the coiled-coil dimer bind to each other, forming polymers. Interacts with FtsZ.</text>
</comment>
<comment type="subcellular location">
    <subcellularLocation>
        <location>Cytoplasm</location>
    </subcellularLocation>
    <text evidence="1">Localizes to the septum at mid-cell, in a FtsZ-like pattern.</text>
</comment>
<comment type="similarity">
    <text evidence="1">Belongs to the ZapB family.</text>
</comment>
<dbReference type="EMBL" id="CP000789">
    <property type="protein sequence ID" value="ABU69721.1"/>
    <property type="molecule type" value="Genomic_DNA"/>
</dbReference>
<dbReference type="RefSeq" id="WP_005428165.1">
    <property type="nucleotide sequence ID" value="NC_022269.1"/>
</dbReference>
<dbReference type="SMR" id="A7MWJ1"/>
<dbReference type="GeneID" id="67378638"/>
<dbReference type="KEGG" id="vha:VIBHAR_00720"/>
<dbReference type="PATRIC" id="fig|338187.25.peg.1894"/>
<dbReference type="Proteomes" id="UP000008152">
    <property type="component" value="Chromosome I"/>
</dbReference>
<dbReference type="GO" id="GO:0005737">
    <property type="term" value="C:cytoplasm"/>
    <property type="evidence" value="ECO:0007669"/>
    <property type="project" value="UniProtKB-SubCell"/>
</dbReference>
<dbReference type="GO" id="GO:0000917">
    <property type="term" value="P:division septum assembly"/>
    <property type="evidence" value="ECO:0007669"/>
    <property type="project" value="UniProtKB-KW"/>
</dbReference>
<dbReference type="GO" id="GO:0043093">
    <property type="term" value="P:FtsZ-dependent cytokinesis"/>
    <property type="evidence" value="ECO:0007669"/>
    <property type="project" value="UniProtKB-UniRule"/>
</dbReference>
<dbReference type="Gene3D" id="1.20.5.340">
    <property type="match status" value="1"/>
</dbReference>
<dbReference type="HAMAP" id="MF_01196">
    <property type="entry name" value="ZapB"/>
    <property type="match status" value="1"/>
</dbReference>
<dbReference type="InterPro" id="IPR009252">
    <property type="entry name" value="Cell_div_ZapB"/>
</dbReference>
<dbReference type="Pfam" id="PF06005">
    <property type="entry name" value="ZapB"/>
    <property type="match status" value="1"/>
</dbReference>
<gene>
    <name evidence="1" type="primary">zapB</name>
    <name type="ordered locus">VIBHAR_00720</name>
</gene>
<protein>
    <recommendedName>
        <fullName evidence="1">Cell division protein ZapB</fullName>
    </recommendedName>
</protein>
<feature type="chain" id="PRO_0000333941" description="Cell division protein ZapB">
    <location>
        <begin position="1"/>
        <end position="80"/>
    </location>
</feature>
<feature type="region of interest" description="Disordered" evidence="2">
    <location>
        <begin position="41"/>
        <end position="60"/>
    </location>
</feature>
<feature type="coiled-coil region" evidence="1">
    <location>
        <begin position="3"/>
        <end position="80"/>
    </location>
</feature>
<feature type="compositionally biased region" description="Basic and acidic residues" evidence="2">
    <location>
        <begin position="41"/>
        <end position="53"/>
    </location>
</feature>
<sequence length="80" mass="9472">MSFEVLEQLESKIQTAVDTITLLQMEVEELKEDKVKLETEANELRSQREELEQKSQQAQQEHAQWQERIRALLGKMDEVE</sequence>
<accession>A7MWJ1</accession>
<name>ZAPB_VIBC1</name>
<organism>
    <name type="scientific">Vibrio campbellii (strain ATCC BAA-1116)</name>
    <dbReference type="NCBI Taxonomy" id="2902295"/>
    <lineage>
        <taxon>Bacteria</taxon>
        <taxon>Pseudomonadati</taxon>
        <taxon>Pseudomonadota</taxon>
        <taxon>Gammaproteobacteria</taxon>
        <taxon>Vibrionales</taxon>
        <taxon>Vibrionaceae</taxon>
        <taxon>Vibrio</taxon>
    </lineage>
</organism>
<keyword id="KW-0131">Cell cycle</keyword>
<keyword id="KW-0132">Cell division</keyword>
<keyword id="KW-0175">Coiled coil</keyword>
<keyword id="KW-0963">Cytoplasm</keyword>
<keyword id="KW-0717">Septation</keyword>